<reference key="1">
    <citation type="journal article" date="2002" name="Microbiology">
        <title>A third fatty acid delta9-desaturase from Mortierella alpina with a different substrate specificity to ole1p and ole2p.</title>
        <authorList>
            <person name="MacKenzie D.A."/>
            <person name="Carter A.T."/>
            <person name="Wongwathanarat P."/>
            <person name="Eagles J."/>
            <person name="Salt J."/>
            <person name="Archer D.B."/>
        </authorList>
    </citation>
    <scope>NUCLEOTIDE SEQUENCE [GENOMIC DNA]</scope>
    <source>
        <strain>ATCC 32222 / CBS 528.72 / M136</strain>
    </source>
</reference>
<name>AKR1_MORAP</name>
<proteinExistence type="inferred from homology"/>
<comment type="function">
    <text evidence="1">Palmitoyltransferase specific for casein kinase 1.</text>
</comment>
<comment type="catalytic activity">
    <reaction>
        <text>L-cysteinyl-[protein] + hexadecanoyl-CoA = S-hexadecanoyl-L-cysteinyl-[protein] + CoA</text>
        <dbReference type="Rhea" id="RHEA:36683"/>
        <dbReference type="Rhea" id="RHEA-COMP:10131"/>
        <dbReference type="Rhea" id="RHEA-COMP:11032"/>
        <dbReference type="ChEBI" id="CHEBI:29950"/>
        <dbReference type="ChEBI" id="CHEBI:57287"/>
        <dbReference type="ChEBI" id="CHEBI:57379"/>
        <dbReference type="ChEBI" id="CHEBI:74151"/>
        <dbReference type="EC" id="2.3.1.225"/>
    </reaction>
</comment>
<comment type="subcellular location">
    <subcellularLocation>
        <location>Early endosome membrane</location>
        <topology>Multi-pass membrane protein</topology>
    </subcellularLocation>
    <subcellularLocation>
        <location evidence="1">Golgi apparatus membrane</location>
        <topology evidence="1">Multi-pass membrane protein</topology>
    </subcellularLocation>
</comment>
<comment type="domain">
    <text evidence="1">The DHHC domain is required for palmitoyltransferase activity.</text>
</comment>
<comment type="similarity">
    <text evidence="4">Belongs to the DHHC palmitoyltransferase family. AKR/ZDHHC17 subfamily.</text>
</comment>
<evidence type="ECO:0000250" key="1"/>
<evidence type="ECO:0000255" key="2"/>
<evidence type="ECO:0000255" key="3">
    <source>
        <dbReference type="PROSITE-ProRule" id="PRU00067"/>
    </source>
</evidence>
<evidence type="ECO:0000305" key="4"/>
<sequence>DPMLQDSQGFNALHLATHSSNAMLVLYLLMAGEMPVDTADTLGHTSLMWAAYQGDSLSVQILLKHGARVDTKDREGFTPLHWAVVKGNRECLSKILMAGADIKAGDKSGKTPVDMIKELKGTMIWDKALSDAKLSSDGQTRRTPFDKLMVLFPWYIALPLAVAQFLFGHIGAIKFLLRTRTPNDMLQTPYYTAVFQSTAFWVGFVWLRYLLGNTSHLLWMNIAFFVGYTSALYFFYGAVMADPGWTKANSSYESQREAVVQMADRGLLDARHFCVSCIAQRPLRSKHCKFCNRCVAKFDHHCPWIYNCIGAKNHRAFLIFLALFLSSVPIYAYLSFEYLHVLSPSYVPVSSDPCLLGDTLCGYFQYDAFTTTLAFWSLFQMTWPGLLFLVQLYQVGQAKTTNEAMNFQRHSYLGKSMTIRQRILRSLTEIDSEMAGAGHPLQEESINLLEANGTATNDEDEVTLFAQEESKPVGFGDHEGHNHGARRAGGGGMWNLLVGTARRRRQQGEDRDVNPFDFGLWQNCVGFWSDGTQGPMRGVNWYSFYEAEARGGAATSRRM</sequence>
<accession>Q9UVH3</accession>
<organism>
    <name type="scientific">Mortierella alpina</name>
    <name type="common">Oleaginous fungus</name>
    <name type="synonym">Mortierella renispora</name>
    <dbReference type="NCBI Taxonomy" id="64518"/>
    <lineage>
        <taxon>Eukaryota</taxon>
        <taxon>Fungi</taxon>
        <taxon>Fungi incertae sedis</taxon>
        <taxon>Mucoromycota</taxon>
        <taxon>Mortierellomycotina</taxon>
        <taxon>Mortierellomycetes</taxon>
        <taxon>Mortierellales</taxon>
        <taxon>Mortierellaceae</taxon>
        <taxon>Mortierella</taxon>
    </lineage>
</organism>
<dbReference type="EC" id="2.3.1.225"/>
<dbReference type="EMBL" id="AJ249747">
    <property type="protein sequence ID" value="CAB56510.1"/>
    <property type="molecule type" value="Genomic_DNA"/>
</dbReference>
<dbReference type="SMR" id="Q9UVH3"/>
<dbReference type="GO" id="GO:0031901">
    <property type="term" value="C:early endosome membrane"/>
    <property type="evidence" value="ECO:0007669"/>
    <property type="project" value="UniProtKB-SubCell"/>
</dbReference>
<dbReference type="GO" id="GO:0000139">
    <property type="term" value="C:Golgi membrane"/>
    <property type="evidence" value="ECO:0007669"/>
    <property type="project" value="UniProtKB-SubCell"/>
</dbReference>
<dbReference type="GO" id="GO:0019706">
    <property type="term" value="F:protein-cysteine S-palmitoyltransferase activity"/>
    <property type="evidence" value="ECO:0007669"/>
    <property type="project" value="UniProtKB-EC"/>
</dbReference>
<dbReference type="Gene3D" id="1.25.40.20">
    <property type="entry name" value="Ankyrin repeat-containing domain"/>
    <property type="match status" value="1"/>
</dbReference>
<dbReference type="InterPro" id="IPR002110">
    <property type="entry name" value="Ankyrin_rpt"/>
</dbReference>
<dbReference type="InterPro" id="IPR036770">
    <property type="entry name" value="Ankyrin_rpt-contain_sf"/>
</dbReference>
<dbReference type="InterPro" id="IPR001594">
    <property type="entry name" value="Palmitoyltrfase_DHHC"/>
</dbReference>
<dbReference type="PANTHER" id="PTHR24161">
    <property type="entry name" value="ANK_REP_REGION DOMAIN-CONTAINING PROTEIN-RELATED"/>
    <property type="match status" value="1"/>
</dbReference>
<dbReference type="PANTHER" id="PTHR24161:SF85">
    <property type="entry name" value="PALMITOYLTRANSFERASE HIP14"/>
    <property type="match status" value="1"/>
</dbReference>
<dbReference type="Pfam" id="PF12796">
    <property type="entry name" value="Ank_2"/>
    <property type="match status" value="1"/>
</dbReference>
<dbReference type="Pfam" id="PF01529">
    <property type="entry name" value="DHHC"/>
    <property type="match status" value="1"/>
</dbReference>
<dbReference type="SMART" id="SM00248">
    <property type="entry name" value="ANK"/>
    <property type="match status" value="3"/>
</dbReference>
<dbReference type="SUPFAM" id="SSF48403">
    <property type="entry name" value="Ankyrin repeat"/>
    <property type="match status" value="1"/>
</dbReference>
<dbReference type="PROSITE" id="PS50297">
    <property type="entry name" value="ANK_REP_REGION"/>
    <property type="match status" value="1"/>
</dbReference>
<dbReference type="PROSITE" id="PS50088">
    <property type="entry name" value="ANK_REPEAT"/>
    <property type="match status" value="2"/>
</dbReference>
<dbReference type="PROSITE" id="PS50216">
    <property type="entry name" value="DHHC"/>
    <property type="match status" value="1"/>
</dbReference>
<keyword id="KW-0012">Acyltransferase</keyword>
<keyword id="KW-0040">ANK repeat</keyword>
<keyword id="KW-0967">Endosome</keyword>
<keyword id="KW-0333">Golgi apparatus</keyword>
<keyword id="KW-0449">Lipoprotein</keyword>
<keyword id="KW-0472">Membrane</keyword>
<keyword id="KW-0564">Palmitate</keyword>
<keyword id="KW-0677">Repeat</keyword>
<keyword id="KW-0808">Transferase</keyword>
<keyword id="KW-0812">Transmembrane</keyword>
<keyword id="KW-1133">Transmembrane helix</keyword>
<protein>
    <recommendedName>
        <fullName>Palmitoyltransferase AKR1</fullName>
        <ecNumber>2.3.1.225</ecNumber>
    </recommendedName>
    <alternativeName>
        <fullName>Ankyrin repeat-containing protein AKR1</fullName>
    </alternativeName>
</protein>
<feature type="chain" id="PRO_0000212926" description="Palmitoyltransferase AKR1">
    <location>
        <begin position="1" status="less than"/>
        <end position="559"/>
    </location>
</feature>
<feature type="transmembrane region" description="Helical" evidence="2">
    <location>
        <begin position="148"/>
        <end position="168"/>
    </location>
</feature>
<feature type="transmembrane region" description="Helical" evidence="2">
    <location>
        <begin position="192"/>
        <end position="212"/>
    </location>
</feature>
<feature type="transmembrane region" description="Helical" evidence="2">
    <location>
        <begin position="217"/>
        <end position="237"/>
    </location>
</feature>
<feature type="transmembrane region" description="Helical" evidence="2">
    <location>
        <begin position="316"/>
        <end position="336"/>
    </location>
</feature>
<feature type="transmembrane region" description="Helical" evidence="2">
    <location>
        <begin position="373"/>
        <end position="393"/>
    </location>
</feature>
<feature type="repeat" description="ANK 1">
    <location>
        <begin position="8"/>
        <end position="38"/>
    </location>
</feature>
<feature type="repeat" description="ANK 2">
    <location>
        <begin position="42"/>
        <end position="71"/>
    </location>
</feature>
<feature type="repeat" description="ANK 3">
    <location>
        <begin position="75"/>
        <end position="104"/>
    </location>
</feature>
<feature type="domain" description="DHHC" evidence="3">
    <location>
        <begin position="272"/>
        <end position="322"/>
    </location>
</feature>
<feature type="active site" description="S-palmitoyl cysteine intermediate" evidence="1">
    <location>
        <position position="302"/>
    </location>
</feature>
<feature type="non-terminal residue">
    <location>
        <position position="1"/>
    </location>
</feature>